<proteinExistence type="evidence at protein level"/>
<protein>
    <recommendedName>
        <fullName>Pyrokinin-4</fullName>
    </recommendedName>
    <alternativeName>
        <fullName>YXPRL-amide</fullName>
    </alternativeName>
</protein>
<dbReference type="GO" id="GO:0005576">
    <property type="term" value="C:extracellular region"/>
    <property type="evidence" value="ECO:0007669"/>
    <property type="project" value="UniProtKB-SubCell"/>
</dbReference>
<dbReference type="GO" id="GO:0007218">
    <property type="term" value="P:neuropeptide signaling pathway"/>
    <property type="evidence" value="ECO:0007669"/>
    <property type="project" value="UniProtKB-KW"/>
</dbReference>
<organism>
    <name type="scientific">Deropeltis cf. erythrocephala JT-2004</name>
    <name type="common">Cockroach</name>
    <dbReference type="NCBI Taxonomy" id="303919"/>
    <lineage>
        <taxon>Eukaryota</taxon>
        <taxon>Metazoa</taxon>
        <taxon>Ecdysozoa</taxon>
        <taxon>Arthropoda</taxon>
        <taxon>Hexapoda</taxon>
        <taxon>Insecta</taxon>
        <taxon>Pterygota</taxon>
        <taxon>Neoptera</taxon>
        <taxon>Polyneoptera</taxon>
        <taxon>Dictyoptera</taxon>
        <taxon>Blattodea</taxon>
        <taxon>Blattoidea</taxon>
        <taxon>Blattidae</taxon>
        <taxon>Blattinae</taxon>
        <taxon>Deropeltis</taxon>
    </lineage>
</organism>
<feature type="peptide" id="PRO_0000044327" description="Pyrokinin-4">
    <location>
        <begin position="1"/>
        <end position="12"/>
    </location>
</feature>
<feature type="modified residue" description="Leucine amide" evidence="3">
    <location>
        <position position="12"/>
    </location>
</feature>
<comment type="function">
    <text evidence="1">Mediates visceral muscle contractile activity (myotropic activity).</text>
</comment>
<comment type="subcellular location">
    <subcellularLocation>
        <location evidence="4">Secreted</location>
    </subcellularLocation>
</comment>
<comment type="mass spectrometry" mass="1447.7" method="MALDI" evidence="3"/>
<comment type="similarity">
    <text evidence="2">Belongs to the pyrokinin family.</text>
</comment>
<accession>P84415</accession>
<sequence length="12" mass="1449">DHLPHDVYSPRL</sequence>
<keyword id="KW-0027">Amidation</keyword>
<keyword id="KW-0903">Direct protein sequencing</keyword>
<keyword id="KW-0527">Neuropeptide</keyword>
<keyword id="KW-0964">Secreted</keyword>
<reference evidence="4" key="1">
    <citation type="journal article" date="2005" name="Peptides">
        <title>Peptidomics of neurohemal organs from species of the cockroach family Blattidae: how do neuropeptides of closely related species differ?</title>
        <authorList>
            <person name="Predel R."/>
            <person name="Gaede G."/>
        </authorList>
    </citation>
    <scope>PROTEIN SEQUENCE</scope>
    <scope>MASS SPECTROMETRY</scope>
    <scope>AMIDATION AT LEU-12</scope>
    <source>
        <tissue evidence="3">Corpora allata</tissue>
    </source>
</reference>
<name>PPK4_DEREJ</name>
<evidence type="ECO:0000250" key="1">
    <source>
        <dbReference type="UniProtKB" id="P82619"/>
    </source>
</evidence>
<evidence type="ECO:0000255" key="2"/>
<evidence type="ECO:0000269" key="3">
    <source>
    </source>
</evidence>
<evidence type="ECO:0000305" key="4"/>